<reference key="1">
    <citation type="journal article" date="2004" name="Proc. Natl. Acad. Sci. U.S.A.">
        <title>Genomic plasticity of the causative agent of melioidosis, Burkholderia pseudomallei.</title>
        <authorList>
            <person name="Holden M.T.G."/>
            <person name="Titball R.W."/>
            <person name="Peacock S.J."/>
            <person name="Cerdeno-Tarraga A.-M."/>
            <person name="Atkins T."/>
            <person name="Crossman L.C."/>
            <person name="Pitt T."/>
            <person name="Churcher C."/>
            <person name="Mungall K.L."/>
            <person name="Bentley S.D."/>
            <person name="Sebaihia M."/>
            <person name="Thomson N.R."/>
            <person name="Bason N."/>
            <person name="Beacham I.R."/>
            <person name="Brooks K."/>
            <person name="Brown K.A."/>
            <person name="Brown N.F."/>
            <person name="Challis G.L."/>
            <person name="Cherevach I."/>
            <person name="Chillingworth T."/>
            <person name="Cronin A."/>
            <person name="Crossett B."/>
            <person name="Davis P."/>
            <person name="DeShazer D."/>
            <person name="Feltwell T."/>
            <person name="Fraser A."/>
            <person name="Hance Z."/>
            <person name="Hauser H."/>
            <person name="Holroyd S."/>
            <person name="Jagels K."/>
            <person name="Keith K.E."/>
            <person name="Maddison M."/>
            <person name="Moule S."/>
            <person name="Price C."/>
            <person name="Quail M.A."/>
            <person name="Rabbinowitsch E."/>
            <person name="Rutherford K."/>
            <person name="Sanders M."/>
            <person name="Simmonds M."/>
            <person name="Songsivilai S."/>
            <person name="Stevens K."/>
            <person name="Tumapa S."/>
            <person name="Vesaratchavest M."/>
            <person name="Whitehead S."/>
            <person name="Yeats C."/>
            <person name="Barrell B.G."/>
            <person name="Oyston P.C.F."/>
            <person name="Parkhill J."/>
        </authorList>
    </citation>
    <scope>NUCLEOTIDE SEQUENCE [LARGE SCALE GENOMIC DNA]</scope>
    <source>
        <strain>K96243</strain>
    </source>
</reference>
<keyword id="KW-0963">Cytoplasm</keyword>
<keyword id="KW-0342">GTP-binding</keyword>
<keyword id="KW-0378">Hydrolase</keyword>
<keyword id="KW-0460">Magnesium</keyword>
<keyword id="KW-0479">Metal-binding</keyword>
<keyword id="KW-0547">Nucleotide-binding</keyword>
<keyword id="KW-0630">Potassium</keyword>
<keyword id="KW-1185">Reference proteome</keyword>
<keyword id="KW-0819">tRNA processing</keyword>
<organism>
    <name type="scientific">Burkholderia pseudomallei (strain K96243)</name>
    <dbReference type="NCBI Taxonomy" id="272560"/>
    <lineage>
        <taxon>Bacteria</taxon>
        <taxon>Pseudomonadati</taxon>
        <taxon>Pseudomonadota</taxon>
        <taxon>Betaproteobacteria</taxon>
        <taxon>Burkholderiales</taxon>
        <taxon>Burkholderiaceae</taxon>
        <taxon>Burkholderia</taxon>
        <taxon>pseudomallei group</taxon>
    </lineage>
</organism>
<evidence type="ECO:0000255" key="1">
    <source>
        <dbReference type="HAMAP-Rule" id="MF_00379"/>
    </source>
</evidence>
<sequence>MLATDSDPIVAIATASGRGGIGVVRLSLGRAGEAAARALSDALCGARLMPRHASYVPFLDGAGEPLDRGIALYFPAPHSYTGEHVIELQGHGGPIVLQLLLQRCLDAGRAHGLRLAEPGEFTRRAFLNDKLDLAQAEAVADLIEASTEAAARSAGRSLDGAFSRDIHALVDDVIALRMLVEATLDFPEEEIDFLEAADARGKLAHIRERLAHVLGDARQGALLREGLSVVLAGQPNVGKSSLLNALAGAELAIVTPIAGTTRDKVAQTIQIEGIPLHIIDTAGLRETEDEVEKIGIARTWGEIERADVVLHLLDARSGLGPGDEAIAARFPDGVPVVRVLNKTDLTGAPASVTRTGGGAARADVCEVRLSAKRGDGIDLLRGELLRIAGWQAGAESVYLARERHLIALRAAQAHLARAAEHAEQNAQALDLFAEELRLAQERLNSITGEFTSDDLLGVIFSRFCIGK</sequence>
<gene>
    <name evidence="1" type="primary">mnmE</name>
    <name evidence="1" type="synonym">trmE</name>
    <name type="ordered locus">BPSL0080</name>
</gene>
<dbReference type="EC" id="3.6.-.-" evidence="1"/>
<dbReference type="EMBL" id="BX571965">
    <property type="protein sequence ID" value="CAH34064.1"/>
    <property type="molecule type" value="Genomic_DNA"/>
</dbReference>
<dbReference type="RefSeq" id="WP_004524586.1">
    <property type="nucleotide sequence ID" value="NZ_CP009538.1"/>
</dbReference>
<dbReference type="RefSeq" id="YP_106706.1">
    <property type="nucleotide sequence ID" value="NC_006350.1"/>
</dbReference>
<dbReference type="SMR" id="Q63YV9"/>
<dbReference type="STRING" id="272560.BPSL0080"/>
<dbReference type="GeneID" id="93058592"/>
<dbReference type="KEGG" id="bps:BPSL0080"/>
<dbReference type="PATRIC" id="fig|272560.51.peg.1653"/>
<dbReference type="eggNOG" id="COG0486">
    <property type="taxonomic scope" value="Bacteria"/>
</dbReference>
<dbReference type="Proteomes" id="UP000000605">
    <property type="component" value="Chromosome 1"/>
</dbReference>
<dbReference type="GO" id="GO:0005829">
    <property type="term" value="C:cytosol"/>
    <property type="evidence" value="ECO:0007669"/>
    <property type="project" value="TreeGrafter"/>
</dbReference>
<dbReference type="GO" id="GO:0005525">
    <property type="term" value="F:GTP binding"/>
    <property type="evidence" value="ECO:0007669"/>
    <property type="project" value="UniProtKB-UniRule"/>
</dbReference>
<dbReference type="GO" id="GO:0003924">
    <property type="term" value="F:GTPase activity"/>
    <property type="evidence" value="ECO:0007669"/>
    <property type="project" value="UniProtKB-UniRule"/>
</dbReference>
<dbReference type="GO" id="GO:0046872">
    <property type="term" value="F:metal ion binding"/>
    <property type="evidence" value="ECO:0007669"/>
    <property type="project" value="UniProtKB-KW"/>
</dbReference>
<dbReference type="GO" id="GO:0030488">
    <property type="term" value="P:tRNA methylation"/>
    <property type="evidence" value="ECO:0007669"/>
    <property type="project" value="TreeGrafter"/>
</dbReference>
<dbReference type="GO" id="GO:0002098">
    <property type="term" value="P:tRNA wobble uridine modification"/>
    <property type="evidence" value="ECO:0007669"/>
    <property type="project" value="TreeGrafter"/>
</dbReference>
<dbReference type="CDD" id="cd04164">
    <property type="entry name" value="trmE"/>
    <property type="match status" value="1"/>
</dbReference>
<dbReference type="CDD" id="cd14858">
    <property type="entry name" value="TrmE_N"/>
    <property type="match status" value="1"/>
</dbReference>
<dbReference type="Gene3D" id="3.40.50.300">
    <property type="entry name" value="P-loop containing nucleotide triphosphate hydrolases"/>
    <property type="match status" value="1"/>
</dbReference>
<dbReference type="Gene3D" id="3.30.1360.120">
    <property type="entry name" value="Probable tRNA modification gtpase trme, domain 1"/>
    <property type="match status" value="1"/>
</dbReference>
<dbReference type="Gene3D" id="1.20.120.430">
    <property type="entry name" value="tRNA modification GTPase MnmE domain 2"/>
    <property type="match status" value="1"/>
</dbReference>
<dbReference type="HAMAP" id="MF_00379">
    <property type="entry name" value="GTPase_MnmE"/>
    <property type="match status" value="1"/>
</dbReference>
<dbReference type="InterPro" id="IPR031168">
    <property type="entry name" value="G_TrmE"/>
</dbReference>
<dbReference type="InterPro" id="IPR006073">
    <property type="entry name" value="GTP-bd"/>
</dbReference>
<dbReference type="InterPro" id="IPR018948">
    <property type="entry name" value="GTP-bd_TrmE_N"/>
</dbReference>
<dbReference type="InterPro" id="IPR004520">
    <property type="entry name" value="GTPase_MnmE"/>
</dbReference>
<dbReference type="InterPro" id="IPR027368">
    <property type="entry name" value="MnmE_dom2"/>
</dbReference>
<dbReference type="InterPro" id="IPR025867">
    <property type="entry name" value="MnmE_helical"/>
</dbReference>
<dbReference type="InterPro" id="IPR027417">
    <property type="entry name" value="P-loop_NTPase"/>
</dbReference>
<dbReference type="InterPro" id="IPR005225">
    <property type="entry name" value="Small_GTP-bd"/>
</dbReference>
<dbReference type="InterPro" id="IPR027266">
    <property type="entry name" value="TrmE/GcvT_dom1"/>
</dbReference>
<dbReference type="NCBIfam" id="TIGR00450">
    <property type="entry name" value="mnmE_trmE_thdF"/>
    <property type="match status" value="1"/>
</dbReference>
<dbReference type="NCBIfam" id="NF003661">
    <property type="entry name" value="PRK05291.1-3"/>
    <property type="match status" value="1"/>
</dbReference>
<dbReference type="NCBIfam" id="TIGR00231">
    <property type="entry name" value="small_GTP"/>
    <property type="match status" value="1"/>
</dbReference>
<dbReference type="PANTHER" id="PTHR42714">
    <property type="entry name" value="TRNA MODIFICATION GTPASE GTPBP3"/>
    <property type="match status" value="1"/>
</dbReference>
<dbReference type="PANTHER" id="PTHR42714:SF2">
    <property type="entry name" value="TRNA MODIFICATION GTPASE GTPBP3, MITOCHONDRIAL"/>
    <property type="match status" value="1"/>
</dbReference>
<dbReference type="Pfam" id="PF01926">
    <property type="entry name" value="MMR_HSR1"/>
    <property type="match status" value="1"/>
</dbReference>
<dbReference type="Pfam" id="PF12631">
    <property type="entry name" value="MnmE_helical"/>
    <property type="match status" value="1"/>
</dbReference>
<dbReference type="Pfam" id="PF10396">
    <property type="entry name" value="TrmE_N"/>
    <property type="match status" value="1"/>
</dbReference>
<dbReference type="PRINTS" id="PR00326">
    <property type="entry name" value="GTP1OBG"/>
</dbReference>
<dbReference type="SUPFAM" id="SSF52540">
    <property type="entry name" value="P-loop containing nucleoside triphosphate hydrolases"/>
    <property type="match status" value="1"/>
</dbReference>
<dbReference type="SUPFAM" id="SSF116878">
    <property type="entry name" value="TrmE connector domain"/>
    <property type="match status" value="1"/>
</dbReference>
<dbReference type="PROSITE" id="PS51709">
    <property type="entry name" value="G_TRME"/>
    <property type="match status" value="1"/>
</dbReference>
<name>MNME_BURPS</name>
<protein>
    <recommendedName>
        <fullName evidence="1">tRNA modification GTPase MnmE</fullName>
        <ecNumber evidence="1">3.6.-.-</ecNumber>
    </recommendedName>
</protein>
<comment type="function">
    <text evidence="1">Exhibits a very high intrinsic GTPase hydrolysis rate. Involved in the addition of a carboxymethylaminomethyl (cmnm) group at the wobble position (U34) of certain tRNAs, forming tRNA-cmnm(5)s(2)U34.</text>
</comment>
<comment type="cofactor">
    <cofactor evidence="1">
        <name>K(+)</name>
        <dbReference type="ChEBI" id="CHEBI:29103"/>
    </cofactor>
    <text evidence="1">Binds 1 potassium ion per subunit.</text>
</comment>
<comment type="subunit">
    <text evidence="1">Homodimer. Heterotetramer of two MnmE and two MnmG subunits.</text>
</comment>
<comment type="subcellular location">
    <subcellularLocation>
        <location evidence="1">Cytoplasm</location>
    </subcellularLocation>
</comment>
<comment type="similarity">
    <text evidence="1">Belongs to the TRAFAC class TrmE-Era-EngA-EngB-Septin-like GTPase superfamily. TrmE GTPase family.</text>
</comment>
<accession>Q63YV9</accession>
<proteinExistence type="inferred from homology"/>
<feature type="chain" id="PRO_0000345744" description="tRNA modification GTPase MnmE">
    <location>
        <begin position="1"/>
        <end position="467"/>
    </location>
</feature>
<feature type="domain" description="TrmE-type G">
    <location>
        <begin position="226"/>
        <end position="389"/>
    </location>
</feature>
<feature type="binding site" evidence="1">
    <location>
        <position position="25"/>
    </location>
    <ligand>
        <name>(6S)-5-formyl-5,6,7,8-tetrahydrofolate</name>
        <dbReference type="ChEBI" id="CHEBI:57457"/>
    </ligand>
</feature>
<feature type="binding site" evidence="1">
    <location>
        <position position="87"/>
    </location>
    <ligand>
        <name>(6S)-5-formyl-5,6,7,8-tetrahydrofolate</name>
        <dbReference type="ChEBI" id="CHEBI:57457"/>
    </ligand>
</feature>
<feature type="binding site" evidence="1">
    <location>
        <position position="130"/>
    </location>
    <ligand>
        <name>(6S)-5-formyl-5,6,7,8-tetrahydrofolate</name>
        <dbReference type="ChEBI" id="CHEBI:57457"/>
    </ligand>
</feature>
<feature type="binding site" evidence="1">
    <location>
        <begin position="236"/>
        <end position="241"/>
    </location>
    <ligand>
        <name>GTP</name>
        <dbReference type="ChEBI" id="CHEBI:37565"/>
    </ligand>
</feature>
<feature type="binding site" evidence="1">
    <location>
        <position position="236"/>
    </location>
    <ligand>
        <name>K(+)</name>
        <dbReference type="ChEBI" id="CHEBI:29103"/>
    </ligand>
</feature>
<feature type="binding site" evidence="1">
    <location>
        <position position="240"/>
    </location>
    <ligand>
        <name>Mg(2+)</name>
        <dbReference type="ChEBI" id="CHEBI:18420"/>
    </ligand>
</feature>
<feature type="binding site" evidence="1">
    <location>
        <begin position="255"/>
        <end position="261"/>
    </location>
    <ligand>
        <name>GTP</name>
        <dbReference type="ChEBI" id="CHEBI:37565"/>
    </ligand>
</feature>
<feature type="binding site" evidence="1">
    <location>
        <position position="255"/>
    </location>
    <ligand>
        <name>K(+)</name>
        <dbReference type="ChEBI" id="CHEBI:29103"/>
    </ligand>
</feature>
<feature type="binding site" evidence="1">
    <location>
        <position position="257"/>
    </location>
    <ligand>
        <name>K(+)</name>
        <dbReference type="ChEBI" id="CHEBI:29103"/>
    </ligand>
</feature>
<feature type="binding site" evidence="1">
    <location>
        <position position="260"/>
    </location>
    <ligand>
        <name>K(+)</name>
        <dbReference type="ChEBI" id="CHEBI:29103"/>
    </ligand>
</feature>
<feature type="binding site" evidence="1">
    <location>
        <position position="261"/>
    </location>
    <ligand>
        <name>Mg(2+)</name>
        <dbReference type="ChEBI" id="CHEBI:18420"/>
    </ligand>
</feature>
<feature type="binding site" evidence="1">
    <location>
        <begin position="280"/>
        <end position="283"/>
    </location>
    <ligand>
        <name>GTP</name>
        <dbReference type="ChEBI" id="CHEBI:37565"/>
    </ligand>
</feature>
<feature type="binding site" evidence="1">
    <location>
        <position position="467"/>
    </location>
    <ligand>
        <name>(6S)-5-formyl-5,6,7,8-tetrahydrofolate</name>
        <dbReference type="ChEBI" id="CHEBI:57457"/>
    </ligand>
</feature>